<protein>
    <recommendedName>
        <fullName>GMP reductase</fullName>
        <ecNumber>1.7.1.7</ecNumber>
    </recommendedName>
    <alternativeName>
        <fullName>Guanosine 5'-monophosphate oxidoreductase</fullName>
        <shortName>Guanosine monophosphate reductase</shortName>
    </alternativeName>
</protein>
<sequence>MRIEEDLKLGFKDVLIRPKRSTLKSRSDVELERQFTFKHSGQSWSGVPIIAANMDTVGTFSMASALASFDILTAVHKHYSVEEWQAFINNSSADVLKHVMVSTGTSDADFEKTKQILDLNPALNFVCIDVANGYSEHFVQFVAKAREAWPTKTICAGNVVTGEMCEELILSGADIVKVGIGPGSVCTTRVKTGVGYPQLSAVIECADAAHGLGGMIVSDGGCTTPGDVAKAFGGGADFVMLGGMLAGHEESGGRIVEENGEKFMLFYGMSSESAMKRHVGGVAEYRAAEGKTVKLPLRGPVENTARDILGGLRSACTYVGASRLKELTKRTTFIRVQEQENRIFNNL</sequence>
<proteinExistence type="inferred from homology"/>
<evidence type="ECO:0000250" key="1"/>
<evidence type="ECO:0000305" key="2"/>
<dbReference type="EC" id="1.7.1.7"/>
<dbReference type="EMBL" id="AE014075">
    <property type="protein sequence ID" value="AAN78622.1"/>
    <property type="molecule type" value="Genomic_DNA"/>
</dbReference>
<dbReference type="RefSeq" id="WP_001217338.1">
    <property type="nucleotide sequence ID" value="NZ_CP051263.1"/>
</dbReference>
<dbReference type="SMR" id="P60561"/>
<dbReference type="STRING" id="199310.c0124"/>
<dbReference type="GeneID" id="93777331"/>
<dbReference type="KEGG" id="ecc:c0124"/>
<dbReference type="eggNOG" id="COG0516">
    <property type="taxonomic scope" value="Bacteria"/>
</dbReference>
<dbReference type="HOGENOM" id="CLU_022552_5_3_6"/>
<dbReference type="BioCyc" id="ECOL199310:C0124-MONOMER"/>
<dbReference type="Proteomes" id="UP000001410">
    <property type="component" value="Chromosome"/>
</dbReference>
<dbReference type="GO" id="GO:0005829">
    <property type="term" value="C:cytosol"/>
    <property type="evidence" value="ECO:0007669"/>
    <property type="project" value="TreeGrafter"/>
</dbReference>
<dbReference type="GO" id="GO:1902560">
    <property type="term" value="C:GMP reductase complex"/>
    <property type="evidence" value="ECO:0007669"/>
    <property type="project" value="InterPro"/>
</dbReference>
<dbReference type="GO" id="GO:0003920">
    <property type="term" value="F:GMP reductase activity"/>
    <property type="evidence" value="ECO:0007669"/>
    <property type="project" value="UniProtKB-UniRule"/>
</dbReference>
<dbReference type="GO" id="GO:0046872">
    <property type="term" value="F:metal ion binding"/>
    <property type="evidence" value="ECO:0007669"/>
    <property type="project" value="UniProtKB-KW"/>
</dbReference>
<dbReference type="GO" id="GO:0006163">
    <property type="term" value="P:purine nucleotide metabolic process"/>
    <property type="evidence" value="ECO:0007669"/>
    <property type="project" value="UniProtKB-UniRule"/>
</dbReference>
<dbReference type="CDD" id="cd00381">
    <property type="entry name" value="IMPDH"/>
    <property type="match status" value="1"/>
</dbReference>
<dbReference type="FunFam" id="3.20.20.70:FF:000012">
    <property type="entry name" value="GMP reductase"/>
    <property type="match status" value="1"/>
</dbReference>
<dbReference type="Gene3D" id="3.20.20.70">
    <property type="entry name" value="Aldolase class I"/>
    <property type="match status" value="1"/>
</dbReference>
<dbReference type="HAMAP" id="MF_00596">
    <property type="entry name" value="GMP_reduct_type1"/>
    <property type="match status" value="1"/>
</dbReference>
<dbReference type="InterPro" id="IPR013785">
    <property type="entry name" value="Aldolase_TIM"/>
</dbReference>
<dbReference type="InterPro" id="IPR050139">
    <property type="entry name" value="GMP_reductase"/>
</dbReference>
<dbReference type="InterPro" id="IPR005993">
    <property type="entry name" value="GMPR"/>
</dbReference>
<dbReference type="InterPro" id="IPR015875">
    <property type="entry name" value="IMP_DH/GMP_Rdtase_CS"/>
</dbReference>
<dbReference type="InterPro" id="IPR001093">
    <property type="entry name" value="IMP_DH_GMPRt"/>
</dbReference>
<dbReference type="NCBIfam" id="TIGR01305">
    <property type="entry name" value="GMP_reduct_1"/>
    <property type="match status" value="1"/>
</dbReference>
<dbReference type="NCBIfam" id="NF003470">
    <property type="entry name" value="PRK05096.1"/>
    <property type="match status" value="1"/>
</dbReference>
<dbReference type="PANTHER" id="PTHR43170">
    <property type="entry name" value="GMP REDUCTASE"/>
    <property type="match status" value="1"/>
</dbReference>
<dbReference type="PANTHER" id="PTHR43170:SF5">
    <property type="entry name" value="GMP REDUCTASE"/>
    <property type="match status" value="1"/>
</dbReference>
<dbReference type="Pfam" id="PF00478">
    <property type="entry name" value="IMPDH"/>
    <property type="match status" value="1"/>
</dbReference>
<dbReference type="PIRSF" id="PIRSF000235">
    <property type="entry name" value="GMP_reductase"/>
    <property type="match status" value="1"/>
</dbReference>
<dbReference type="SMART" id="SM01240">
    <property type="entry name" value="IMPDH"/>
    <property type="match status" value="1"/>
</dbReference>
<dbReference type="SUPFAM" id="SSF51412">
    <property type="entry name" value="Inosine monophosphate dehydrogenase (IMPDH)"/>
    <property type="match status" value="1"/>
</dbReference>
<dbReference type="PROSITE" id="PS00487">
    <property type="entry name" value="IMP_DH_GMP_RED"/>
    <property type="match status" value="1"/>
</dbReference>
<name>GUAC_ECOL6</name>
<reference key="1">
    <citation type="journal article" date="2002" name="Proc. Natl. Acad. Sci. U.S.A.">
        <title>Extensive mosaic structure revealed by the complete genome sequence of uropathogenic Escherichia coli.</title>
        <authorList>
            <person name="Welch R.A."/>
            <person name="Burland V."/>
            <person name="Plunkett G. III"/>
            <person name="Redford P."/>
            <person name="Roesch P."/>
            <person name="Rasko D."/>
            <person name="Buckles E.L."/>
            <person name="Liou S.-R."/>
            <person name="Boutin A."/>
            <person name="Hackett J."/>
            <person name="Stroud D."/>
            <person name="Mayhew G.F."/>
            <person name="Rose D.J."/>
            <person name="Zhou S."/>
            <person name="Schwartz D.C."/>
            <person name="Perna N.T."/>
            <person name="Mobley H.L.T."/>
            <person name="Donnenberg M.S."/>
            <person name="Blattner F.R."/>
        </authorList>
    </citation>
    <scope>NUCLEOTIDE SEQUENCE [LARGE SCALE GENOMIC DNA]</scope>
    <source>
        <strain>CFT073 / ATCC 700928 / UPEC</strain>
    </source>
</reference>
<feature type="chain" id="PRO_0000093736" description="GMP reductase">
    <location>
        <begin position="1"/>
        <end position="347"/>
    </location>
</feature>
<feature type="active site" description="Thioimidate intermediate" evidence="1">
    <location>
        <position position="186"/>
    </location>
</feature>
<feature type="binding site" evidence="1">
    <location>
        <begin position="108"/>
        <end position="131"/>
    </location>
    <ligand>
        <name>NADP(+)</name>
        <dbReference type="ChEBI" id="CHEBI:58349"/>
    </ligand>
</feature>
<feature type="binding site" evidence="1">
    <location>
        <position position="181"/>
    </location>
    <ligand>
        <name>K(+)</name>
        <dbReference type="ChEBI" id="CHEBI:29103"/>
    </ligand>
</feature>
<feature type="binding site" evidence="1">
    <location>
        <position position="183"/>
    </location>
    <ligand>
        <name>K(+)</name>
        <dbReference type="ChEBI" id="CHEBI:29103"/>
    </ligand>
</feature>
<feature type="binding site" evidence="1">
    <location>
        <begin position="216"/>
        <end position="239"/>
    </location>
    <ligand>
        <name>NADP(+)</name>
        <dbReference type="ChEBI" id="CHEBI:58349"/>
    </ligand>
</feature>
<accession>P60561</accession>
<accession>P15344</accession>
<accession>P78048</accession>
<comment type="function">
    <text evidence="1">Catalyzes the irreversible NADPH-dependent deamination of GMP to IMP. It functions in the conversion of nucleobase, nucleoside and nucleotide derivatives of G to A nucleotides, and in maintaining the intracellular balance of A and G nucleotides (By similarity).</text>
</comment>
<comment type="catalytic activity">
    <reaction>
        <text>IMP + NH4(+) + NADP(+) = GMP + NADPH + 2 H(+)</text>
        <dbReference type="Rhea" id="RHEA:17185"/>
        <dbReference type="ChEBI" id="CHEBI:15378"/>
        <dbReference type="ChEBI" id="CHEBI:28938"/>
        <dbReference type="ChEBI" id="CHEBI:57783"/>
        <dbReference type="ChEBI" id="CHEBI:58053"/>
        <dbReference type="ChEBI" id="CHEBI:58115"/>
        <dbReference type="ChEBI" id="CHEBI:58349"/>
        <dbReference type="EC" id="1.7.1.7"/>
    </reaction>
</comment>
<comment type="subunit">
    <text evidence="1">Homotetramer.</text>
</comment>
<comment type="similarity">
    <text evidence="2">Belongs to the IMPDH/GMPR family. GuaC type 1 subfamily.</text>
</comment>
<keyword id="KW-0479">Metal-binding</keyword>
<keyword id="KW-0521">NADP</keyword>
<keyword id="KW-0560">Oxidoreductase</keyword>
<keyword id="KW-0630">Potassium</keyword>
<keyword id="KW-1185">Reference proteome</keyword>
<organism>
    <name type="scientific">Escherichia coli O6:H1 (strain CFT073 / ATCC 700928 / UPEC)</name>
    <dbReference type="NCBI Taxonomy" id="199310"/>
    <lineage>
        <taxon>Bacteria</taxon>
        <taxon>Pseudomonadati</taxon>
        <taxon>Pseudomonadota</taxon>
        <taxon>Gammaproteobacteria</taxon>
        <taxon>Enterobacterales</taxon>
        <taxon>Enterobacteriaceae</taxon>
        <taxon>Escherichia</taxon>
    </lineage>
</organism>
<gene>
    <name type="primary">guaC</name>
    <name type="ordered locus">c0124</name>
</gene>